<organism>
    <name type="scientific">Methanococcoides burtonii (strain DSM 6242 / NBRC 107633 / OCM 468 / ACE-M)</name>
    <dbReference type="NCBI Taxonomy" id="259564"/>
    <lineage>
        <taxon>Archaea</taxon>
        <taxon>Methanobacteriati</taxon>
        <taxon>Methanobacteriota</taxon>
        <taxon>Stenosarchaea group</taxon>
        <taxon>Methanomicrobia</taxon>
        <taxon>Methanosarcinales</taxon>
        <taxon>Methanosarcinaceae</taxon>
        <taxon>Methanococcoides</taxon>
    </lineage>
</organism>
<reference key="1">
    <citation type="journal article" date="2009" name="ISME J.">
        <title>The genome sequence of the psychrophilic archaeon, Methanococcoides burtonii: the role of genome evolution in cold adaptation.</title>
        <authorList>
            <person name="Allen M.A."/>
            <person name="Lauro F.M."/>
            <person name="Williams T.J."/>
            <person name="Burg D."/>
            <person name="Siddiqui K.S."/>
            <person name="De Francisci D."/>
            <person name="Chong K.W."/>
            <person name="Pilak O."/>
            <person name="Chew H.H."/>
            <person name="De Maere M.Z."/>
            <person name="Ting L."/>
            <person name="Katrib M."/>
            <person name="Ng C."/>
            <person name="Sowers K.R."/>
            <person name="Galperin M.Y."/>
            <person name="Anderson I.J."/>
            <person name="Ivanova N."/>
            <person name="Dalin E."/>
            <person name="Martinez M."/>
            <person name="Lapidus A."/>
            <person name="Hauser L."/>
            <person name="Land M."/>
            <person name="Thomas T."/>
            <person name="Cavicchioli R."/>
        </authorList>
    </citation>
    <scope>NUCLEOTIDE SEQUENCE [LARGE SCALE GENOMIC DNA]</scope>
    <source>
        <strain>DSM 6242 / NBRC 107633 / OCM 468 / ACE-M</strain>
    </source>
</reference>
<name>KAD_METBU</name>
<feature type="chain" id="PRO_1000021744" description="Adenylate kinase">
    <location>
        <begin position="1"/>
        <end position="215"/>
    </location>
</feature>
<feature type="region of interest" description="NMP" evidence="1">
    <location>
        <begin position="30"/>
        <end position="59"/>
    </location>
</feature>
<feature type="region of interest" description="LID" evidence="1">
    <location>
        <begin position="126"/>
        <end position="162"/>
    </location>
</feature>
<feature type="binding site" evidence="1">
    <location>
        <begin position="10"/>
        <end position="15"/>
    </location>
    <ligand>
        <name>ATP</name>
        <dbReference type="ChEBI" id="CHEBI:30616"/>
    </ligand>
</feature>
<feature type="binding site" evidence="1">
    <location>
        <position position="31"/>
    </location>
    <ligand>
        <name>AMP</name>
        <dbReference type="ChEBI" id="CHEBI:456215"/>
    </ligand>
</feature>
<feature type="binding site" evidence="1">
    <location>
        <position position="36"/>
    </location>
    <ligand>
        <name>AMP</name>
        <dbReference type="ChEBI" id="CHEBI:456215"/>
    </ligand>
</feature>
<feature type="binding site" evidence="1">
    <location>
        <begin position="57"/>
        <end position="59"/>
    </location>
    <ligand>
        <name>AMP</name>
        <dbReference type="ChEBI" id="CHEBI:456215"/>
    </ligand>
</feature>
<feature type="binding site" evidence="1">
    <location>
        <begin position="85"/>
        <end position="88"/>
    </location>
    <ligand>
        <name>AMP</name>
        <dbReference type="ChEBI" id="CHEBI:456215"/>
    </ligand>
</feature>
<feature type="binding site" evidence="1">
    <location>
        <position position="92"/>
    </location>
    <ligand>
        <name>AMP</name>
        <dbReference type="ChEBI" id="CHEBI:456215"/>
    </ligand>
</feature>
<feature type="binding site" evidence="1">
    <location>
        <position position="127"/>
    </location>
    <ligand>
        <name>ATP</name>
        <dbReference type="ChEBI" id="CHEBI:30616"/>
    </ligand>
</feature>
<feature type="binding site" evidence="1">
    <location>
        <position position="130"/>
    </location>
    <ligand>
        <name>Zn(2+)</name>
        <dbReference type="ChEBI" id="CHEBI:29105"/>
        <note>structural</note>
    </ligand>
</feature>
<feature type="binding site" evidence="1">
    <location>
        <position position="132"/>
    </location>
    <ligand>
        <name>Zn(2+)</name>
        <dbReference type="ChEBI" id="CHEBI:29105"/>
        <note>structural</note>
    </ligand>
</feature>
<feature type="binding site" evidence="1">
    <location>
        <begin position="135"/>
        <end position="136"/>
    </location>
    <ligand>
        <name>ATP</name>
        <dbReference type="ChEBI" id="CHEBI:30616"/>
    </ligand>
</feature>
<feature type="binding site" evidence="1">
    <location>
        <position position="149"/>
    </location>
    <ligand>
        <name>Zn(2+)</name>
        <dbReference type="ChEBI" id="CHEBI:29105"/>
        <note>structural</note>
    </ligand>
</feature>
<feature type="binding site" evidence="1">
    <location>
        <position position="152"/>
    </location>
    <ligand>
        <name>Zn(2+)</name>
        <dbReference type="ChEBI" id="CHEBI:29105"/>
        <note>structural</note>
    </ligand>
</feature>
<feature type="binding site" evidence="1">
    <location>
        <position position="159"/>
    </location>
    <ligand>
        <name>AMP</name>
        <dbReference type="ChEBI" id="CHEBI:456215"/>
    </ligand>
</feature>
<feature type="binding site" evidence="1">
    <location>
        <position position="170"/>
    </location>
    <ligand>
        <name>AMP</name>
        <dbReference type="ChEBI" id="CHEBI:456215"/>
    </ligand>
</feature>
<feature type="binding site" evidence="1">
    <location>
        <position position="198"/>
    </location>
    <ligand>
        <name>ATP</name>
        <dbReference type="ChEBI" id="CHEBI:30616"/>
    </ligand>
</feature>
<sequence>MNVVLFGPPGAGKGTQAKELDKHYQIPHISTGDILRANVRDGTKLGKEAKGYMDKGELVPDEVLIGVIKNRLAESDCKPGYLLDGYPRTTPQADALSSILVEIGMPLEVVLNIDVADEELVTRLCGRYVCTCGESYHMKFNPPKKENVCDACGADLYQRDDDKEDVIRQRLDSYKEKTQPLISYYGEKGLLVDIDGTGAIDRIFSDICKTLDQYK</sequence>
<evidence type="ECO:0000255" key="1">
    <source>
        <dbReference type="HAMAP-Rule" id="MF_00235"/>
    </source>
</evidence>
<gene>
    <name evidence="1" type="primary">adk</name>
    <name type="ordered locus">Mbur_0025</name>
</gene>
<keyword id="KW-0067">ATP-binding</keyword>
<keyword id="KW-0963">Cytoplasm</keyword>
<keyword id="KW-0418">Kinase</keyword>
<keyword id="KW-0479">Metal-binding</keyword>
<keyword id="KW-0545">Nucleotide biosynthesis</keyword>
<keyword id="KW-0547">Nucleotide-binding</keyword>
<keyword id="KW-0808">Transferase</keyword>
<keyword id="KW-0862">Zinc</keyword>
<protein>
    <recommendedName>
        <fullName evidence="1">Adenylate kinase</fullName>
        <shortName evidence="1">AK</shortName>
        <ecNumber evidence="1">2.7.4.3</ecNumber>
    </recommendedName>
    <alternativeName>
        <fullName evidence="1">ATP-AMP transphosphorylase</fullName>
    </alternativeName>
    <alternativeName>
        <fullName evidence="1">ATP:AMP phosphotransferase</fullName>
    </alternativeName>
    <alternativeName>
        <fullName evidence="1">Adenylate monophosphate kinase</fullName>
    </alternativeName>
</protein>
<comment type="function">
    <text evidence="1">Catalyzes the reversible transfer of the terminal phosphate group between ATP and AMP. Plays an important role in cellular energy homeostasis and in adenine nucleotide metabolism.</text>
</comment>
<comment type="catalytic activity">
    <reaction evidence="1">
        <text>AMP + ATP = 2 ADP</text>
        <dbReference type="Rhea" id="RHEA:12973"/>
        <dbReference type="ChEBI" id="CHEBI:30616"/>
        <dbReference type="ChEBI" id="CHEBI:456215"/>
        <dbReference type="ChEBI" id="CHEBI:456216"/>
        <dbReference type="EC" id="2.7.4.3"/>
    </reaction>
</comment>
<comment type="pathway">
    <text evidence="1">Purine metabolism; AMP biosynthesis via salvage pathway; AMP from ADP: step 1/1.</text>
</comment>
<comment type="subunit">
    <text evidence="1">Monomer.</text>
</comment>
<comment type="subcellular location">
    <subcellularLocation>
        <location evidence="1">Cytoplasm</location>
    </subcellularLocation>
</comment>
<comment type="domain">
    <text evidence="1">Consists of three domains, a large central CORE domain and two small peripheral domains, NMPbind and LID, which undergo movements during catalysis. The LID domain closes over the site of phosphoryl transfer upon ATP binding. Assembling and dissambling the active center during each catalytic cycle provides an effective means to prevent ATP hydrolysis. Some bacteria have evolved a zinc-coordinating structure that stabilizes the LID domain.</text>
</comment>
<comment type="similarity">
    <text evidence="1">Belongs to the adenylate kinase family.</text>
</comment>
<dbReference type="EC" id="2.7.4.3" evidence="1"/>
<dbReference type="EMBL" id="CP000300">
    <property type="protein sequence ID" value="ABE51049.1"/>
    <property type="molecule type" value="Genomic_DNA"/>
</dbReference>
<dbReference type="RefSeq" id="WP_011498213.1">
    <property type="nucleotide sequence ID" value="NC_007955.1"/>
</dbReference>
<dbReference type="SMR" id="Q12ZS7"/>
<dbReference type="STRING" id="259564.Mbur_0025"/>
<dbReference type="GeneID" id="3996888"/>
<dbReference type="KEGG" id="mbu:Mbur_0025"/>
<dbReference type="HOGENOM" id="CLU_032354_1_2_2"/>
<dbReference type="OrthoDB" id="31230at2157"/>
<dbReference type="UniPathway" id="UPA00588">
    <property type="reaction ID" value="UER00649"/>
</dbReference>
<dbReference type="Proteomes" id="UP000001979">
    <property type="component" value="Chromosome"/>
</dbReference>
<dbReference type="GO" id="GO:0005737">
    <property type="term" value="C:cytoplasm"/>
    <property type="evidence" value="ECO:0007669"/>
    <property type="project" value="UniProtKB-SubCell"/>
</dbReference>
<dbReference type="GO" id="GO:0004017">
    <property type="term" value="F:adenylate kinase activity"/>
    <property type="evidence" value="ECO:0007669"/>
    <property type="project" value="UniProtKB-UniRule"/>
</dbReference>
<dbReference type="GO" id="GO:0005524">
    <property type="term" value="F:ATP binding"/>
    <property type="evidence" value="ECO:0007669"/>
    <property type="project" value="UniProtKB-UniRule"/>
</dbReference>
<dbReference type="GO" id="GO:0008270">
    <property type="term" value="F:zinc ion binding"/>
    <property type="evidence" value="ECO:0007669"/>
    <property type="project" value="UniProtKB-UniRule"/>
</dbReference>
<dbReference type="GO" id="GO:0044209">
    <property type="term" value="P:AMP salvage"/>
    <property type="evidence" value="ECO:0007669"/>
    <property type="project" value="UniProtKB-UniRule"/>
</dbReference>
<dbReference type="CDD" id="cd01428">
    <property type="entry name" value="ADK"/>
    <property type="match status" value="1"/>
</dbReference>
<dbReference type="FunFam" id="3.40.50.300:FF:000106">
    <property type="entry name" value="Adenylate kinase mitochondrial"/>
    <property type="match status" value="1"/>
</dbReference>
<dbReference type="Gene3D" id="3.40.50.300">
    <property type="entry name" value="P-loop containing nucleotide triphosphate hydrolases"/>
    <property type="match status" value="1"/>
</dbReference>
<dbReference type="HAMAP" id="MF_00235">
    <property type="entry name" value="Adenylate_kinase_Adk"/>
    <property type="match status" value="1"/>
</dbReference>
<dbReference type="InterPro" id="IPR006259">
    <property type="entry name" value="Adenyl_kin_sub"/>
</dbReference>
<dbReference type="InterPro" id="IPR000850">
    <property type="entry name" value="Adenylat/UMP-CMP_kin"/>
</dbReference>
<dbReference type="InterPro" id="IPR033690">
    <property type="entry name" value="Adenylat_kinase_CS"/>
</dbReference>
<dbReference type="InterPro" id="IPR007862">
    <property type="entry name" value="Adenylate_kinase_lid-dom"/>
</dbReference>
<dbReference type="InterPro" id="IPR027417">
    <property type="entry name" value="P-loop_NTPase"/>
</dbReference>
<dbReference type="NCBIfam" id="TIGR01351">
    <property type="entry name" value="adk"/>
    <property type="match status" value="1"/>
</dbReference>
<dbReference type="NCBIfam" id="NF001380">
    <property type="entry name" value="PRK00279.1-2"/>
    <property type="match status" value="1"/>
</dbReference>
<dbReference type="NCBIfam" id="NF001381">
    <property type="entry name" value="PRK00279.1-3"/>
    <property type="match status" value="1"/>
</dbReference>
<dbReference type="NCBIfam" id="NF011100">
    <property type="entry name" value="PRK14527.1"/>
    <property type="match status" value="1"/>
</dbReference>
<dbReference type="PANTHER" id="PTHR23359">
    <property type="entry name" value="NUCLEOTIDE KINASE"/>
    <property type="match status" value="1"/>
</dbReference>
<dbReference type="Pfam" id="PF00406">
    <property type="entry name" value="ADK"/>
    <property type="match status" value="1"/>
</dbReference>
<dbReference type="Pfam" id="PF05191">
    <property type="entry name" value="ADK_lid"/>
    <property type="match status" value="1"/>
</dbReference>
<dbReference type="PRINTS" id="PR00094">
    <property type="entry name" value="ADENYLTKNASE"/>
</dbReference>
<dbReference type="SUPFAM" id="SSF52540">
    <property type="entry name" value="P-loop containing nucleoside triphosphate hydrolases"/>
    <property type="match status" value="1"/>
</dbReference>
<dbReference type="PROSITE" id="PS00113">
    <property type="entry name" value="ADENYLATE_KINASE"/>
    <property type="match status" value="1"/>
</dbReference>
<accession>Q12ZS7</accession>
<proteinExistence type="inferred from homology"/>